<protein>
    <recommendedName>
        <fullName>Proepiregulin</fullName>
    </recommendedName>
    <component>
        <recommendedName>
            <fullName>Epiregulin</fullName>
            <shortName>EPR</shortName>
        </recommendedName>
    </component>
</protein>
<name>EREG_HUMAN</name>
<feature type="signal peptide" evidence="4">
    <location>
        <begin position="1"/>
        <end position="29"/>
    </location>
</feature>
<feature type="chain" id="PRO_0000302800" description="Proepiregulin">
    <location>
        <begin position="30"/>
        <end position="169"/>
    </location>
</feature>
<feature type="propeptide" id="PRO_0000007556" evidence="2 3">
    <location>
        <begin position="30"/>
        <end position="62"/>
    </location>
</feature>
<feature type="chain" id="PRO_0000007557" description="Epiregulin">
    <location>
        <begin position="63"/>
        <end position="108"/>
    </location>
</feature>
<feature type="propeptide" id="PRO_0000007558" description="Removed in mature form" evidence="1">
    <location>
        <begin position="109"/>
        <end position="169"/>
    </location>
</feature>
<feature type="topological domain" description="Extracellular" evidence="4">
    <location>
        <begin position="60"/>
        <end position="119"/>
    </location>
</feature>
<feature type="transmembrane region" description="Helical" evidence="4">
    <location>
        <begin position="120"/>
        <end position="140"/>
    </location>
</feature>
<feature type="topological domain" description="Cytoplasmic" evidence="4">
    <location>
        <begin position="141"/>
        <end position="169"/>
    </location>
</feature>
<feature type="domain" description="EGF-like" evidence="5">
    <location>
        <begin position="64"/>
        <end position="104"/>
    </location>
</feature>
<feature type="glycosylation site" description="N-linked (GlcNAc...) asparagine" evidence="4">
    <location>
        <position position="47"/>
    </location>
</feature>
<feature type="disulfide bond" evidence="5 6">
    <location>
        <begin position="68"/>
        <end position="81"/>
    </location>
</feature>
<feature type="disulfide bond" evidence="5 6">
    <location>
        <begin position="76"/>
        <end position="92"/>
    </location>
</feature>
<feature type="disulfide bond" evidence="5 6">
    <location>
        <begin position="94"/>
        <end position="103"/>
    </location>
</feature>
<feature type="sequence variant" id="VAR_035833" description="In a breast cancer sample; somatic mutation." evidence="7">
    <original>G</original>
    <variation>A</variation>
    <location>
        <position position="42"/>
    </location>
</feature>
<feature type="sequence variant" id="VAR_033827" description="In dbSNP:rs35275884.">
    <original>R</original>
    <variation>Q</variation>
    <location>
        <position position="147"/>
    </location>
</feature>
<feature type="strand" evidence="12">
    <location>
        <begin position="65"/>
        <end position="67"/>
    </location>
</feature>
<feature type="helix" evidence="11">
    <location>
        <begin position="70"/>
        <end position="72"/>
    </location>
</feature>
<feature type="turn" evidence="11">
    <location>
        <begin position="73"/>
        <end position="75"/>
    </location>
</feature>
<feature type="strand" evidence="11">
    <location>
        <begin position="79"/>
        <end position="84"/>
    </location>
</feature>
<feature type="turn" evidence="11">
    <location>
        <begin position="85"/>
        <end position="88"/>
    </location>
</feature>
<feature type="strand" evidence="11">
    <location>
        <begin position="89"/>
        <end position="94"/>
    </location>
</feature>
<feature type="strand" evidence="11">
    <location>
        <begin position="98"/>
        <end position="100"/>
    </location>
</feature>
<evidence type="ECO:0000250" key="1"/>
<evidence type="ECO:0000250" key="2">
    <source>
        <dbReference type="UniProtKB" id="Q61521"/>
    </source>
</evidence>
<evidence type="ECO:0000250" key="3">
    <source>
        <dbReference type="UniProtKB" id="Q9Z0L5"/>
    </source>
</evidence>
<evidence type="ECO:0000255" key="4"/>
<evidence type="ECO:0000255" key="5">
    <source>
        <dbReference type="PROSITE-ProRule" id="PRU00076"/>
    </source>
</evidence>
<evidence type="ECO:0000269" key="6">
    <source>
    </source>
</evidence>
<evidence type="ECO:0000269" key="7">
    <source>
    </source>
</evidence>
<evidence type="ECO:0000269" key="8">
    <source>
    </source>
</evidence>
<evidence type="ECO:0000269" key="9">
    <source>
    </source>
</evidence>
<evidence type="ECO:0000303" key="10">
    <source>
    </source>
</evidence>
<evidence type="ECO:0007829" key="11">
    <source>
        <dbReference type="PDB" id="5E8D"/>
    </source>
</evidence>
<evidence type="ECO:0007829" key="12">
    <source>
        <dbReference type="PDB" id="7LEN"/>
    </source>
</evidence>
<proteinExistence type="evidence at protein level"/>
<accession>O14944</accession>
<accession>B2RC66</accession>
<accession>Q6FH69</accession>
<reference key="1">
    <citation type="journal article" date="1997" name="Biochem. J.">
        <title>Distribution of mRNA for human epiregulin, a differentially expressed member of the epidermal growth factor family.</title>
        <authorList>
            <person name="Toyoda H."/>
            <person name="Komurasaki T."/>
            <person name="Uchida D."/>
            <person name="Morimoto S."/>
        </authorList>
    </citation>
    <scope>NUCLEOTIDE SEQUENCE [MRNA]</scope>
    <scope>SUBCELLULAR LOCATION</scope>
    <scope>TISSUE SPECIFICITY</scope>
    <source>
        <tissue>Colon adenocarcinoma</tissue>
    </source>
</reference>
<reference key="2">
    <citation type="journal article" date="2004" name="Nat. Genet.">
        <title>Complete sequencing and characterization of 21,243 full-length human cDNAs.</title>
        <authorList>
            <person name="Ota T."/>
            <person name="Suzuki Y."/>
            <person name="Nishikawa T."/>
            <person name="Otsuki T."/>
            <person name="Sugiyama T."/>
            <person name="Irie R."/>
            <person name="Wakamatsu A."/>
            <person name="Hayashi K."/>
            <person name="Sato H."/>
            <person name="Nagai K."/>
            <person name="Kimura K."/>
            <person name="Makita H."/>
            <person name="Sekine M."/>
            <person name="Obayashi M."/>
            <person name="Nishi T."/>
            <person name="Shibahara T."/>
            <person name="Tanaka T."/>
            <person name="Ishii S."/>
            <person name="Yamamoto J."/>
            <person name="Saito K."/>
            <person name="Kawai Y."/>
            <person name="Isono Y."/>
            <person name="Nakamura Y."/>
            <person name="Nagahari K."/>
            <person name="Murakami K."/>
            <person name="Yasuda T."/>
            <person name="Iwayanagi T."/>
            <person name="Wagatsuma M."/>
            <person name="Shiratori A."/>
            <person name="Sudo H."/>
            <person name="Hosoiri T."/>
            <person name="Kaku Y."/>
            <person name="Kodaira H."/>
            <person name="Kondo H."/>
            <person name="Sugawara M."/>
            <person name="Takahashi M."/>
            <person name="Kanda K."/>
            <person name="Yokoi T."/>
            <person name="Furuya T."/>
            <person name="Kikkawa E."/>
            <person name="Omura Y."/>
            <person name="Abe K."/>
            <person name="Kamihara K."/>
            <person name="Katsuta N."/>
            <person name="Sato K."/>
            <person name="Tanikawa M."/>
            <person name="Yamazaki M."/>
            <person name="Ninomiya K."/>
            <person name="Ishibashi T."/>
            <person name="Yamashita H."/>
            <person name="Murakawa K."/>
            <person name="Fujimori K."/>
            <person name="Tanai H."/>
            <person name="Kimata M."/>
            <person name="Watanabe M."/>
            <person name="Hiraoka S."/>
            <person name="Chiba Y."/>
            <person name="Ishida S."/>
            <person name="Ono Y."/>
            <person name="Takiguchi S."/>
            <person name="Watanabe S."/>
            <person name="Yosida M."/>
            <person name="Hotuta T."/>
            <person name="Kusano J."/>
            <person name="Kanehori K."/>
            <person name="Takahashi-Fujii A."/>
            <person name="Hara H."/>
            <person name="Tanase T.-O."/>
            <person name="Nomura Y."/>
            <person name="Togiya S."/>
            <person name="Komai F."/>
            <person name="Hara R."/>
            <person name="Takeuchi K."/>
            <person name="Arita M."/>
            <person name="Imose N."/>
            <person name="Musashino K."/>
            <person name="Yuuki H."/>
            <person name="Oshima A."/>
            <person name="Sasaki N."/>
            <person name="Aotsuka S."/>
            <person name="Yoshikawa Y."/>
            <person name="Matsunawa H."/>
            <person name="Ichihara T."/>
            <person name="Shiohata N."/>
            <person name="Sano S."/>
            <person name="Moriya S."/>
            <person name="Momiyama H."/>
            <person name="Satoh N."/>
            <person name="Takami S."/>
            <person name="Terashima Y."/>
            <person name="Suzuki O."/>
            <person name="Nakagawa S."/>
            <person name="Senoh A."/>
            <person name="Mizoguchi H."/>
            <person name="Goto Y."/>
            <person name="Shimizu F."/>
            <person name="Wakebe H."/>
            <person name="Hishigaki H."/>
            <person name="Watanabe T."/>
            <person name="Sugiyama A."/>
            <person name="Takemoto M."/>
            <person name="Kawakami B."/>
            <person name="Yamazaki M."/>
            <person name="Watanabe K."/>
            <person name="Kumagai A."/>
            <person name="Itakura S."/>
            <person name="Fukuzumi Y."/>
            <person name="Fujimori Y."/>
            <person name="Komiyama M."/>
            <person name="Tashiro H."/>
            <person name="Tanigami A."/>
            <person name="Fujiwara T."/>
            <person name="Ono T."/>
            <person name="Yamada K."/>
            <person name="Fujii Y."/>
            <person name="Ozaki K."/>
            <person name="Hirao M."/>
            <person name="Ohmori Y."/>
            <person name="Kawabata A."/>
            <person name="Hikiji T."/>
            <person name="Kobatake N."/>
            <person name="Inagaki H."/>
            <person name="Ikema Y."/>
            <person name="Okamoto S."/>
            <person name="Okitani R."/>
            <person name="Kawakami T."/>
            <person name="Noguchi S."/>
            <person name="Itoh T."/>
            <person name="Shigeta K."/>
            <person name="Senba T."/>
            <person name="Matsumura K."/>
            <person name="Nakajima Y."/>
            <person name="Mizuno T."/>
            <person name="Morinaga M."/>
            <person name="Sasaki M."/>
            <person name="Togashi T."/>
            <person name="Oyama M."/>
            <person name="Hata H."/>
            <person name="Watanabe M."/>
            <person name="Komatsu T."/>
            <person name="Mizushima-Sugano J."/>
            <person name="Satoh T."/>
            <person name="Shirai Y."/>
            <person name="Takahashi Y."/>
            <person name="Nakagawa K."/>
            <person name="Okumura K."/>
            <person name="Nagase T."/>
            <person name="Nomura N."/>
            <person name="Kikuchi H."/>
            <person name="Masuho Y."/>
            <person name="Yamashita R."/>
            <person name="Nakai K."/>
            <person name="Yada T."/>
            <person name="Nakamura Y."/>
            <person name="Ohara O."/>
            <person name="Isogai T."/>
            <person name="Sugano S."/>
        </authorList>
    </citation>
    <scope>NUCLEOTIDE SEQUENCE [LARGE SCALE MRNA]</scope>
</reference>
<reference key="3">
    <citation type="submission" date="2004-06" db="EMBL/GenBank/DDBJ databases">
        <title>Cloning of human full open reading frames in Gateway(TM) system entry vector (pDONR201).</title>
        <authorList>
            <person name="Halleck A."/>
            <person name="Ebert L."/>
            <person name="Mkoundinya M."/>
            <person name="Schick M."/>
            <person name="Eisenstein S."/>
            <person name="Neubert P."/>
            <person name="Kstrang K."/>
            <person name="Schatten R."/>
            <person name="Shen B."/>
            <person name="Henze S."/>
            <person name="Mar W."/>
            <person name="Korn B."/>
            <person name="Zuo D."/>
            <person name="Hu Y."/>
            <person name="LaBaer J."/>
        </authorList>
    </citation>
    <scope>NUCLEOTIDE SEQUENCE [LARGE SCALE MRNA]</scope>
</reference>
<reference key="4">
    <citation type="submission" date="2005-07" db="EMBL/GenBank/DDBJ databases">
        <authorList>
            <person name="Mural R.J."/>
            <person name="Istrail S."/>
            <person name="Sutton G."/>
            <person name="Florea L."/>
            <person name="Halpern A.L."/>
            <person name="Mobarry C.M."/>
            <person name="Lippert R."/>
            <person name="Walenz B."/>
            <person name="Shatkay H."/>
            <person name="Dew I."/>
            <person name="Miller J.R."/>
            <person name="Flanigan M.J."/>
            <person name="Edwards N.J."/>
            <person name="Bolanos R."/>
            <person name="Fasulo D."/>
            <person name="Halldorsson B.V."/>
            <person name="Hannenhalli S."/>
            <person name="Turner R."/>
            <person name="Yooseph S."/>
            <person name="Lu F."/>
            <person name="Nusskern D.R."/>
            <person name="Shue B.C."/>
            <person name="Zheng X.H."/>
            <person name="Zhong F."/>
            <person name="Delcher A.L."/>
            <person name="Huson D.H."/>
            <person name="Kravitz S.A."/>
            <person name="Mouchard L."/>
            <person name="Reinert K."/>
            <person name="Remington K.A."/>
            <person name="Clark A.G."/>
            <person name="Waterman M.S."/>
            <person name="Eichler E.E."/>
            <person name="Adams M.D."/>
            <person name="Hunkapiller M.W."/>
            <person name="Myers E.W."/>
            <person name="Venter J.C."/>
        </authorList>
    </citation>
    <scope>NUCLEOTIDE SEQUENCE [LARGE SCALE GENOMIC DNA]</scope>
</reference>
<reference key="5">
    <citation type="journal article" date="2004" name="Genome Res.">
        <title>The status, quality, and expansion of the NIH full-length cDNA project: the Mammalian Gene Collection (MGC).</title>
        <authorList>
            <consortium name="The MGC Project Team"/>
        </authorList>
    </citation>
    <scope>NUCLEOTIDE SEQUENCE [LARGE SCALE MRNA]</scope>
</reference>
<reference key="6">
    <citation type="journal article" date="1997" name="Oncogene">
        <title>Epiregulin binds to epidermal growth factor receptor and ErbB-4 and induces tyrosine phosphorylation of epidermal growth factor receptor, ErbB-2, ErbB-3 and ErbB-4.</title>
        <authorList>
            <person name="Komurasaki T."/>
            <person name="Toyoda H."/>
            <person name="Uchida D."/>
            <person name="Morimoto S."/>
        </authorList>
    </citation>
    <scope>FUNCTION AS EGFR LIGAND</scope>
    <scope>INTERACTION WITH EGFR AND ERBB4</scope>
</reference>
<reference key="7">
    <citation type="journal article" date="2003" name="FEBS Lett.">
        <title>Solution structure of epiregulin and the effect of its C-terminal domain for receptor binding affinity.</title>
        <authorList>
            <person name="Sato K."/>
            <person name="Nakamura T."/>
            <person name="Mizuguchi M."/>
            <person name="Miura K."/>
            <person name="Tada M."/>
            <person name="Aizawa T."/>
            <person name="Gomi T."/>
            <person name="Miyamoto K."/>
            <person name="Kawano K."/>
        </authorList>
    </citation>
    <scope>STRUCTURE BY NMR OF 63-108</scope>
    <scope>DISULFIDE BONDS</scope>
</reference>
<reference key="8">
    <citation type="journal article" date="2014" name="Semin. Cell Dev. Biol.">
        <title>Epiregulin: roles in normal physiology and cancer.</title>
        <authorList>
            <person name="Riese D.J. II"/>
            <person name="Cullum R.L."/>
        </authorList>
    </citation>
    <scope>REVIEW</scope>
</reference>
<reference key="9">
    <citation type="journal article" date="2006" name="Science">
        <title>The consensus coding sequences of human breast and colorectal cancers.</title>
        <authorList>
            <person name="Sjoeblom T."/>
            <person name="Jones S."/>
            <person name="Wood L.D."/>
            <person name="Parsons D.W."/>
            <person name="Lin J."/>
            <person name="Barber T.D."/>
            <person name="Mandelker D."/>
            <person name="Leary R.J."/>
            <person name="Ptak J."/>
            <person name="Silliman N."/>
            <person name="Szabo S."/>
            <person name="Buckhaults P."/>
            <person name="Farrell C."/>
            <person name="Meeh P."/>
            <person name="Markowitz S.D."/>
            <person name="Willis J."/>
            <person name="Dawson D."/>
            <person name="Willson J.K.V."/>
            <person name="Gazdar A.F."/>
            <person name="Hartigan J."/>
            <person name="Wu L."/>
            <person name="Liu C."/>
            <person name="Parmigiani G."/>
            <person name="Park B.H."/>
            <person name="Bachman K.E."/>
            <person name="Papadopoulos N."/>
            <person name="Vogelstein B."/>
            <person name="Kinzler K.W."/>
            <person name="Velculescu V.E."/>
        </authorList>
    </citation>
    <scope>VARIANT [LARGE SCALE ANALYSIS] ALA-42</scope>
</reference>
<dbReference type="EMBL" id="D30783">
    <property type="protein sequence ID" value="BAA22146.1"/>
    <property type="molecule type" value="mRNA"/>
</dbReference>
<dbReference type="EMBL" id="AK314959">
    <property type="protein sequence ID" value="BAG37463.1"/>
    <property type="molecule type" value="mRNA"/>
</dbReference>
<dbReference type="EMBL" id="CR541887">
    <property type="protein sequence ID" value="CAG46685.1"/>
    <property type="molecule type" value="mRNA"/>
</dbReference>
<dbReference type="EMBL" id="CH471057">
    <property type="protein sequence ID" value="EAX05709.1"/>
    <property type="molecule type" value="Genomic_DNA"/>
</dbReference>
<dbReference type="EMBL" id="BC136404">
    <property type="protein sequence ID" value="AAI36405.1"/>
    <property type="molecule type" value="mRNA"/>
</dbReference>
<dbReference type="EMBL" id="BC136405">
    <property type="protein sequence ID" value="AAI36406.1"/>
    <property type="molecule type" value="mRNA"/>
</dbReference>
<dbReference type="CCDS" id="CCDS3564.1"/>
<dbReference type="RefSeq" id="NP_001423.1">
    <property type="nucleotide sequence ID" value="NM_001432.3"/>
</dbReference>
<dbReference type="PDB" id="1K36">
    <property type="method" value="NMR"/>
    <property type="chains" value="A=63-108"/>
</dbReference>
<dbReference type="PDB" id="1K37">
    <property type="method" value="NMR"/>
    <property type="chains" value="A=63-108"/>
</dbReference>
<dbReference type="PDB" id="5E8D">
    <property type="method" value="X-ray"/>
    <property type="resolution" value="2.50 A"/>
    <property type="chains" value="A=38-108"/>
</dbReference>
<dbReference type="PDB" id="5WB7">
    <property type="method" value="X-ray"/>
    <property type="resolution" value="2.94 A"/>
    <property type="chains" value="E/F/G/H=56-116"/>
</dbReference>
<dbReference type="PDB" id="7LEN">
    <property type="method" value="X-ray"/>
    <property type="resolution" value="2.90 A"/>
    <property type="chains" value="C/D=63-110"/>
</dbReference>
<dbReference type="PDB" id="7LFR">
    <property type="method" value="X-ray"/>
    <property type="resolution" value="3.20 A"/>
    <property type="chains" value="C/D=63-110"/>
</dbReference>
<dbReference type="PDB" id="7LFS">
    <property type="method" value="X-ray"/>
    <property type="resolution" value="3.50 A"/>
    <property type="chains" value="E/F/G/H=63-110"/>
</dbReference>
<dbReference type="PDB" id="8HGP">
    <property type="method" value="EM"/>
    <property type="resolution" value="4.53 A"/>
    <property type="chains" value="C=60-108"/>
</dbReference>
<dbReference type="PDBsum" id="1K36"/>
<dbReference type="PDBsum" id="1K37"/>
<dbReference type="PDBsum" id="5E8D"/>
<dbReference type="PDBsum" id="5WB7"/>
<dbReference type="PDBsum" id="7LEN"/>
<dbReference type="PDBsum" id="7LFR"/>
<dbReference type="PDBsum" id="7LFS"/>
<dbReference type="PDBsum" id="8HGP"/>
<dbReference type="BMRB" id="O14944"/>
<dbReference type="EMDB" id="EMD-34745"/>
<dbReference type="SMR" id="O14944"/>
<dbReference type="BioGRID" id="108381">
    <property type="interactions" value="15"/>
</dbReference>
<dbReference type="FunCoup" id="O14944">
    <property type="interactions" value="722"/>
</dbReference>
<dbReference type="IntAct" id="O14944">
    <property type="interactions" value="12"/>
</dbReference>
<dbReference type="MINT" id="O14944"/>
<dbReference type="STRING" id="9606.ENSP00000244869"/>
<dbReference type="ChEMBL" id="CHEMBL4662939"/>
<dbReference type="GlyCosmos" id="O14944">
    <property type="glycosylation" value="1 site, No reported glycans"/>
</dbReference>
<dbReference type="GlyGen" id="O14944">
    <property type="glycosylation" value="2 sites"/>
</dbReference>
<dbReference type="iPTMnet" id="O14944"/>
<dbReference type="PhosphoSitePlus" id="O14944"/>
<dbReference type="BioMuta" id="EREG"/>
<dbReference type="jPOST" id="O14944"/>
<dbReference type="MassIVE" id="O14944"/>
<dbReference type="PaxDb" id="9606-ENSP00000244869"/>
<dbReference type="PeptideAtlas" id="O14944"/>
<dbReference type="ProteomicsDB" id="48327"/>
<dbReference type="ABCD" id="O14944">
    <property type="antibodies" value="8 sequenced antibodies"/>
</dbReference>
<dbReference type="Antibodypedia" id="24625">
    <property type="antibodies" value="313 antibodies from 33 providers"/>
</dbReference>
<dbReference type="DNASU" id="2069"/>
<dbReference type="Ensembl" id="ENST00000244869.3">
    <property type="protein sequence ID" value="ENSP00000244869.2"/>
    <property type="gene ID" value="ENSG00000124882.4"/>
</dbReference>
<dbReference type="GeneID" id="2069"/>
<dbReference type="KEGG" id="hsa:2069"/>
<dbReference type="MANE-Select" id="ENST00000244869.3">
    <property type="protein sequence ID" value="ENSP00000244869.2"/>
    <property type="RefSeq nucleotide sequence ID" value="NM_001432.3"/>
    <property type="RefSeq protein sequence ID" value="NP_001423.1"/>
</dbReference>
<dbReference type="UCSC" id="uc003hie.2">
    <property type="organism name" value="human"/>
</dbReference>
<dbReference type="AGR" id="HGNC:3443"/>
<dbReference type="CTD" id="2069"/>
<dbReference type="DisGeNET" id="2069"/>
<dbReference type="GeneCards" id="EREG"/>
<dbReference type="HGNC" id="HGNC:3443">
    <property type="gene designation" value="EREG"/>
</dbReference>
<dbReference type="HPA" id="ENSG00000124882">
    <property type="expression patterns" value="Tissue enriched (bone)"/>
</dbReference>
<dbReference type="MIM" id="602061">
    <property type="type" value="gene"/>
</dbReference>
<dbReference type="neXtProt" id="NX_O14944"/>
<dbReference type="OpenTargets" id="ENSG00000124882"/>
<dbReference type="PharmGKB" id="PA27856"/>
<dbReference type="VEuPathDB" id="HostDB:ENSG00000124882"/>
<dbReference type="eggNOG" id="ENOG502S5DM">
    <property type="taxonomic scope" value="Eukaryota"/>
</dbReference>
<dbReference type="GeneTree" id="ENSGT00510000048748"/>
<dbReference type="HOGENOM" id="CLU_138015_0_0_1"/>
<dbReference type="InParanoid" id="O14944"/>
<dbReference type="OMA" id="CKWYKKN"/>
<dbReference type="OrthoDB" id="6133584at2759"/>
<dbReference type="PAN-GO" id="O14944">
    <property type="GO annotations" value="7 GO annotations based on evolutionary models"/>
</dbReference>
<dbReference type="PhylomeDB" id="O14944"/>
<dbReference type="TreeFam" id="TF336145"/>
<dbReference type="PathwayCommons" id="O14944"/>
<dbReference type="Reactome" id="R-HSA-1227986">
    <property type="pathway name" value="Signaling by ERBB2"/>
</dbReference>
<dbReference type="Reactome" id="R-HSA-1236394">
    <property type="pathway name" value="Signaling by ERBB4"/>
</dbReference>
<dbReference type="Reactome" id="R-HSA-1250196">
    <property type="pathway name" value="SHC1 events in ERBB2 signaling"/>
</dbReference>
<dbReference type="Reactome" id="R-HSA-1250342">
    <property type="pathway name" value="PI3K events in ERBB4 signaling"/>
</dbReference>
<dbReference type="Reactome" id="R-HSA-1250347">
    <property type="pathway name" value="SHC1 events in ERBB4 signaling"/>
</dbReference>
<dbReference type="Reactome" id="R-HSA-1251985">
    <property type="pathway name" value="Nuclear signaling by ERBB4"/>
</dbReference>
<dbReference type="Reactome" id="R-HSA-1257604">
    <property type="pathway name" value="PIP3 activates AKT signaling"/>
</dbReference>
<dbReference type="Reactome" id="R-HSA-177929">
    <property type="pathway name" value="Signaling by EGFR"/>
</dbReference>
<dbReference type="Reactome" id="R-HSA-179812">
    <property type="pathway name" value="GRB2 events in EGFR signaling"/>
</dbReference>
<dbReference type="Reactome" id="R-HSA-180292">
    <property type="pathway name" value="GAB1 signalosome"/>
</dbReference>
<dbReference type="Reactome" id="R-HSA-180336">
    <property type="pathway name" value="SHC1 events in EGFR signaling"/>
</dbReference>
<dbReference type="Reactome" id="R-HSA-182971">
    <property type="pathway name" value="EGFR downregulation"/>
</dbReference>
<dbReference type="Reactome" id="R-HSA-1963640">
    <property type="pathway name" value="GRB2 events in ERBB2 signaling"/>
</dbReference>
<dbReference type="Reactome" id="R-HSA-1963642">
    <property type="pathway name" value="PI3K events in ERBB2 signaling"/>
</dbReference>
<dbReference type="Reactome" id="R-HSA-212718">
    <property type="pathway name" value="EGFR interacts with phospholipase C-gamma"/>
</dbReference>
<dbReference type="Reactome" id="R-HSA-2219530">
    <property type="pathway name" value="Constitutive Signaling by Aberrant PI3K in Cancer"/>
</dbReference>
<dbReference type="Reactome" id="R-HSA-5638303">
    <property type="pathway name" value="Inhibition of Signaling by Overexpressed EGFR"/>
</dbReference>
<dbReference type="Reactome" id="R-HSA-5673001">
    <property type="pathway name" value="RAF/MAP kinase cascade"/>
</dbReference>
<dbReference type="Reactome" id="R-HSA-6785631">
    <property type="pathway name" value="ERBB2 Regulates Cell Motility"/>
</dbReference>
<dbReference type="Reactome" id="R-HSA-6811558">
    <property type="pathway name" value="PI5P, PP2A and IER3 Regulate PI3K/AKT Signaling"/>
</dbReference>
<dbReference type="Reactome" id="R-HSA-8847993">
    <property type="pathway name" value="ERBB2 Activates PTK6 Signaling"/>
</dbReference>
<dbReference type="Reactome" id="R-HSA-8856825">
    <property type="pathway name" value="Cargo recognition for clathrin-mediated endocytosis"/>
</dbReference>
<dbReference type="Reactome" id="R-HSA-8856828">
    <property type="pathway name" value="Clathrin-mediated endocytosis"/>
</dbReference>
<dbReference type="Reactome" id="R-HSA-8863795">
    <property type="pathway name" value="Downregulation of ERBB2 signaling"/>
</dbReference>
<dbReference type="Reactome" id="R-HSA-9009391">
    <property type="pathway name" value="Extra-nuclear estrogen signaling"/>
</dbReference>
<dbReference type="Reactome" id="R-HSA-9634638">
    <property type="pathway name" value="Estrogen-dependent nuclear events downstream of ESR-membrane signaling"/>
</dbReference>
<dbReference type="Reactome" id="R-HSA-9664565">
    <property type="pathway name" value="Signaling by ERBB2 KD Mutants"/>
</dbReference>
<dbReference type="Reactome" id="R-HSA-9665686">
    <property type="pathway name" value="Signaling by ERBB2 TMD/JMD mutants"/>
</dbReference>
<dbReference type="SignaLink" id="O14944"/>
<dbReference type="SIGNOR" id="O14944"/>
<dbReference type="BioGRID-ORCS" id="2069">
    <property type="hits" value="8 hits in 1170 CRISPR screens"/>
</dbReference>
<dbReference type="ChiTaRS" id="EREG">
    <property type="organism name" value="human"/>
</dbReference>
<dbReference type="EvolutionaryTrace" id="O14944"/>
<dbReference type="GeneWiki" id="Epiregulin"/>
<dbReference type="GenomeRNAi" id="2069"/>
<dbReference type="Pharos" id="O14944">
    <property type="development level" value="Tbio"/>
</dbReference>
<dbReference type="PRO" id="PR:O14944"/>
<dbReference type="Proteomes" id="UP000005640">
    <property type="component" value="Chromosome 4"/>
</dbReference>
<dbReference type="RNAct" id="O14944">
    <property type="molecule type" value="protein"/>
</dbReference>
<dbReference type="Bgee" id="ENSG00000124882">
    <property type="expression patterns" value="Expressed in buccal mucosa cell and 107 other cell types or tissues"/>
</dbReference>
<dbReference type="GO" id="GO:0030669">
    <property type="term" value="C:clathrin-coated endocytic vesicle membrane"/>
    <property type="evidence" value="ECO:0000304"/>
    <property type="project" value="Reactome"/>
</dbReference>
<dbReference type="GO" id="GO:0005576">
    <property type="term" value="C:extracellular region"/>
    <property type="evidence" value="ECO:0000304"/>
    <property type="project" value="Reactome"/>
</dbReference>
<dbReference type="GO" id="GO:0005615">
    <property type="term" value="C:extracellular space"/>
    <property type="evidence" value="ECO:0000314"/>
    <property type="project" value="UniProtKB"/>
</dbReference>
<dbReference type="GO" id="GO:0005886">
    <property type="term" value="C:plasma membrane"/>
    <property type="evidence" value="ECO:0000304"/>
    <property type="project" value="UniProtKB"/>
</dbReference>
<dbReference type="GO" id="GO:0005154">
    <property type="term" value="F:epidermal growth factor receptor binding"/>
    <property type="evidence" value="ECO:0000250"/>
    <property type="project" value="UniProtKB"/>
</dbReference>
<dbReference type="GO" id="GO:0008083">
    <property type="term" value="F:growth factor activity"/>
    <property type="evidence" value="ECO:0000318"/>
    <property type="project" value="GO_Central"/>
</dbReference>
<dbReference type="GO" id="GO:0048018">
    <property type="term" value="F:receptor ligand activity"/>
    <property type="evidence" value="ECO:0000314"/>
    <property type="project" value="MGI"/>
</dbReference>
<dbReference type="GO" id="GO:0030297">
    <property type="term" value="F:transmembrane receptor protein tyrosine kinase activator activity"/>
    <property type="evidence" value="ECO:0000314"/>
    <property type="project" value="MGI"/>
</dbReference>
<dbReference type="GO" id="GO:0009653">
    <property type="term" value="P:anatomical structure morphogenesis"/>
    <property type="evidence" value="ECO:0000304"/>
    <property type="project" value="UniProtKB"/>
</dbReference>
<dbReference type="GO" id="GO:0001525">
    <property type="term" value="P:angiogenesis"/>
    <property type="evidence" value="ECO:0007669"/>
    <property type="project" value="UniProtKB-KW"/>
</dbReference>
<dbReference type="GO" id="GO:0009887">
    <property type="term" value="P:animal organ morphogenesis"/>
    <property type="evidence" value="ECO:0000304"/>
    <property type="project" value="UniProtKB"/>
</dbReference>
<dbReference type="GO" id="GO:0007267">
    <property type="term" value="P:cell-cell signaling"/>
    <property type="evidence" value="ECO:0000314"/>
    <property type="project" value="UniProtKB"/>
</dbReference>
<dbReference type="GO" id="GO:0019221">
    <property type="term" value="P:cytokine-mediated signaling pathway"/>
    <property type="evidence" value="ECO:0000314"/>
    <property type="project" value="UniProtKB"/>
</dbReference>
<dbReference type="GO" id="GO:0007173">
    <property type="term" value="P:epidermal growth factor receptor signaling pathway"/>
    <property type="evidence" value="ECO:0000314"/>
    <property type="project" value="MGI"/>
</dbReference>
<dbReference type="GO" id="GO:0038134">
    <property type="term" value="P:ERBB2-EGFR signaling pathway"/>
    <property type="evidence" value="ECO:0000314"/>
    <property type="project" value="MGI"/>
</dbReference>
<dbReference type="GO" id="GO:0038135">
    <property type="term" value="P:ERBB2-ERBB4 signaling pathway"/>
    <property type="evidence" value="ECO:0000314"/>
    <property type="project" value="MGI"/>
</dbReference>
<dbReference type="GO" id="GO:0038138">
    <property type="term" value="P:ERBB4-ERBB4 signaling pathway"/>
    <property type="evidence" value="ECO:0000314"/>
    <property type="project" value="MGI"/>
</dbReference>
<dbReference type="GO" id="GO:0007143">
    <property type="term" value="P:female meiotic nuclear division"/>
    <property type="evidence" value="ECO:0000250"/>
    <property type="project" value="UniProtKB"/>
</dbReference>
<dbReference type="GO" id="GO:0030216">
    <property type="term" value="P:keratinocyte differentiation"/>
    <property type="evidence" value="ECO:0000304"/>
    <property type="project" value="UniProtKB"/>
</dbReference>
<dbReference type="GO" id="GO:0043616">
    <property type="term" value="P:keratinocyte proliferation"/>
    <property type="evidence" value="ECO:0000314"/>
    <property type="project" value="UniProtKB"/>
</dbReference>
<dbReference type="GO" id="GO:0042700">
    <property type="term" value="P:luteinizing hormone signaling pathway"/>
    <property type="evidence" value="ECO:0000250"/>
    <property type="project" value="UniProtKB"/>
</dbReference>
<dbReference type="GO" id="GO:0009299">
    <property type="term" value="P:mRNA transcription"/>
    <property type="evidence" value="ECO:0000314"/>
    <property type="project" value="UniProtKB"/>
</dbReference>
<dbReference type="GO" id="GO:0008285">
    <property type="term" value="P:negative regulation of cell population proliferation"/>
    <property type="evidence" value="ECO:0000250"/>
    <property type="project" value="UniProtKB"/>
</dbReference>
<dbReference type="GO" id="GO:0045892">
    <property type="term" value="P:negative regulation of DNA-templated transcription"/>
    <property type="evidence" value="ECO:0000314"/>
    <property type="project" value="UniProtKB"/>
</dbReference>
<dbReference type="GO" id="GO:0050680">
    <property type="term" value="P:negative regulation of epithelial cell proliferation"/>
    <property type="evidence" value="ECO:0000304"/>
    <property type="project" value="UniProtKB"/>
</dbReference>
<dbReference type="GO" id="GO:0051151">
    <property type="term" value="P:negative regulation of smooth muscle cell differentiation"/>
    <property type="evidence" value="ECO:0000314"/>
    <property type="project" value="UniProtKB"/>
</dbReference>
<dbReference type="GO" id="GO:0001556">
    <property type="term" value="P:oocyte maturation"/>
    <property type="evidence" value="ECO:0000250"/>
    <property type="project" value="UniProtKB"/>
</dbReference>
<dbReference type="GO" id="GO:0001550">
    <property type="term" value="P:ovarian cumulus expansion"/>
    <property type="evidence" value="ECO:0000250"/>
    <property type="project" value="UniProtKB"/>
</dbReference>
<dbReference type="GO" id="GO:0030728">
    <property type="term" value="P:ovulation"/>
    <property type="evidence" value="ECO:0000250"/>
    <property type="project" value="UniProtKB"/>
</dbReference>
<dbReference type="GO" id="GO:0051781">
    <property type="term" value="P:positive regulation of cell division"/>
    <property type="evidence" value="ECO:0007669"/>
    <property type="project" value="UniProtKB-KW"/>
</dbReference>
<dbReference type="GO" id="GO:0008284">
    <property type="term" value="P:positive regulation of cell population proliferation"/>
    <property type="evidence" value="ECO:0000314"/>
    <property type="project" value="UniProtKB"/>
</dbReference>
<dbReference type="GO" id="GO:0001819">
    <property type="term" value="P:positive regulation of cytokine production"/>
    <property type="evidence" value="ECO:0000314"/>
    <property type="project" value="UniProtKB"/>
</dbReference>
<dbReference type="GO" id="GO:0045740">
    <property type="term" value="P:positive regulation of DNA replication"/>
    <property type="evidence" value="ECO:0000314"/>
    <property type="project" value="UniProtKB"/>
</dbReference>
<dbReference type="GO" id="GO:0048146">
    <property type="term" value="P:positive regulation of fibroblast proliferation"/>
    <property type="evidence" value="ECO:0000314"/>
    <property type="project" value="UniProtKB"/>
</dbReference>
<dbReference type="GO" id="GO:0045089">
    <property type="term" value="P:positive regulation of innate immune response"/>
    <property type="evidence" value="ECO:0000250"/>
    <property type="project" value="UniProtKB"/>
</dbReference>
<dbReference type="GO" id="GO:0032755">
    <property type="term" value="P:positive regulation of interleukin-6 production"/>
    <property type="evidence" value="ECO:0000250"/>
    <property type="project" value="UniProtKB"/>
</dbReference>
<dbReference type="GO" id="GO:0045840">
    <property type="term" value="P:positive regulation of mitotic nuclear division"/>
    <property type="evidence" value="ECO:0000250"/>
    <property type="project" value="UniProtKB"/>
</dbReference>
<dbReference type="GO" id="GO:0042327">
    <property type="term" value="P:positive regulation of phosphorylation"/>
    <property type="evidence" value="ECO:0000314"/>
    <property type="project" value="UniProtKB"/>
</dbReference>
<dbReference type="GO" id="GO:0045860">
    <property type="term" value="P:positive regulation of protein kinase activity"/>
    <property type="evidence" value="ECO:0000314"/>
    <property type="project" value="UniProtKB"/>
</dbReference>
<dbReference type="GO" id="GO:0048661">
    <property type="term" value="P:positive regulation of smooth muscle cell proliferation"/>
    <property type="evidence" value="ECO:0000250"/>
    <property type="project" value="UniProtKB"/>
</dbReference>
<dbReference type="GO" id="GO:0048160">
    <property type="term" value="P:primary follicle stage"/>
    <property type="evidence" value="ECO:0000250"/>
    <property type="project" value="UniProtKB"/>
</dbReference>
<dbReference type="GO" id="GO:0043434">
    <property type="term" value="P:response to peptide hormone"/>
    <property type="evidence" value="ECO:0007669"/>
    <property type="project" value="Ensembl"/>
</dbReference>
<dbReference type="GO" id="GO:0042060">
    <property type="term" value="P:wound healing"/>
    <property type="evidence" value="ECO:0000304"/>
    <property type="project" value="UniProtKB"/>
</dbReference>
<dbReference type="FunFam" id="2.10.25.10:FF:000320">
    <property type="entry name" value="Proepiregulin"/>
    <property type="match status" value="1"/>
</dbReference>
<dbReference type="Gene3D" id="2.10.25.10">
    <property type="entry name" value="Laminin"/>
    <property type="match status" value="1"/>
</dbReference>
<dbReference type="InterPro" id="IPR000742">
    <property type="entry name" value="EGF-like_dom"/>
</dbReference>
<dbReference type="PANTHER" id="PTHR10740:SF11">
    <property type="entry name" value="PROEPIREGULIN"/>
    <property type="match status" value="1"/>
</dbReference>
<dbReference type="PANTHER" id="PTHR10740">
    <property type="entry name" value="TRANSFORMING GROWTH FACTOR ALPHA"/>
    <property type="match status" value="1"/>
</dbReference>
<dbReference type="PRINTS" id="PR00009">
    <property type="entry name" value="EGFTGF"/>
</dbReference>
<dbReference type="SUPFAM" id="SSF57196">
    <property type="entry name" value="EGF/Laminin"/>
    <property type="match status" value="1"/>
</dbReference>
<dbReference type="PROSITE" id="PS00022">
    <property type="entry name" value="EGF_1"/>
    <property type="match status" value="1"/>
</dbReference>
<dbReference type="PROSITE" id="PS01186">
    <property type="entry name" value="EGF_2"/>
    <property type="match status" value="1"/>
</dbReference>
<dbReference type="PROSITE" id="PS50026">
    <property type="entry name" value="EGF_3"/>
    <property type="match status" value="1"/>
</dbReference>
<gene>
    <name type="primary">EREG</name>
</gene>
<comment type="function">
    <text evidence="9 10">Ligand of the EGF receptor/EGFR and ERBB4. Stimulates EGFR and ERBB4 tyrosine phosphorylation (PubMed:9419975). Contributes to inflammation, wound healing, tissue repair, and oocyte maturation by regulating angiogenesis and vascular remodeling and by stimulating cell proliferation (PubMed:24631357).</text>
</comment>
<comment type="subunit">
    <text evidence="9">Interacts with EGFR and ERBB4.</text>
</comment>
<comment type="interaction">
    <interactant intactId="EBI-17272224">
        <id>O14944</id>
    </interactant>
    <interactant intactId="EBI-3911467">
        <id>Q07325</id>
        <label>CXCL9</label>
    </interactant>
    <organismsDiffer>false</organismsDiffer>
    <experiments>3</experiments>
</comment>
<comment type="interaction">
    <interactant intactId="EBI-17272224">
        <id>O14944</id>
    </interactant>
    <interactant intactId="EBI-297353">
        <id>P00533</id>
        <label>EGFR</label>
    </interactant>
    <organismsDiffer>false</organismsDiffer>
    <experiments>3</experiments>
</comment>
<comment type="interaction">
    <interactant intactId="EBI-17272224">
        <id>O14944</id>
    </interactant>
    <interactant intactId="EBI-12070086">
        <id>Q5J8X5</id>
        <label>MS4A13</label>
    </interactant>
    <organismsDiffer>false</organismsDiffer>
    <experiments>3</experiments>
</comment>
<comment type="interaction">
    <interactant intactId="EBI-17272224">
        <id>O14944</id>
    </interactant>
    <interactant intactId="EBI-10317425">
        <id>Q9NZG7</id>
        <label>NINJ2</label>
    </interactant>
    <organismsDiffer>false</organismsDiffer>
    <experiments>3</experiments>
</comment>
<comment type="interaction">
    <interactant intactId="EBI-17272224">
        <id>O14944</id>
    </interactant>
    <interactant intactId="EBI-2804156">
        <id>Q6UX06</id>
        <label>OLFM4</label>
    </interactant>
    <organismsDiffer>false</organismsDiffer>
    <experiments>3</experiments>
</comment>
<comment type="subcellular location">
    <molecule>Epiregulin</molecule>
    <subcellularLocation>
        <location evidence="8">Secreted</location>
        <location evidence="8">Extracellular space</location>
    </subcellularLocation>
</comment>
<comment type="subcellular location">
    <molecule>Proepiregulin</molecule>
    <subcellularLocation>
        <location evidence="8">Cell membrane</location>
        <topology evidence="8">Single-pass type I membrane protein</topology>
    </subcellularLocation>
</comment>
<comment type="tissue specificity">
    <text evidence="8">In normal adults, expressed predominantly in the placenta and peripheral blood leukocytes. High levels were detected in carcinomas of the bladder, lung, kidney and colon.</text>
</comment>
<organism>
    <name type="scientific">Homo sapiens</name>
    <name type="common">Human</name>
    <dbReference type="NCBI Taxonomy" id="9606"/>
    <lineage>
        <taxon>Eukaryota</taxon>
        <taxon>Metazoa</taxon>
        <taxon>Chordata</taxon>
        <taxon>Craniata</taxon>
        <taxon>Vertebrata</taxon>
        <taxon>Euteleostomi</taxon>
        <taxon>Mammalia</taxon>
        <taxon>Eutheria</taxon>
        <taxon>Euarchontoglires</taxon>
        <taxon>Primates</taxon>
        <taxon>Haplorrhini</taxon>
        <taxon>Catarrhini</taxon>
        <taxon>Hominidae</taxon>
        <taxon>Homo</taxon>
    </lineage>
</organism>
<sequence length="169" mass="19044">MTAGRRMEMLCAGRVPALLLCLGFHLLQAVLSTTVIPSCIPGESSDNCTALVQTEDNPRVAQVSITKCSSDMNGYCLHGQCIYLVDMSQNYCRCEVGYTGVRCEHFFLTVHQPLSKEYVALTVILIILFLITVVGSTYYFCRWYRNRKSKEPKKEYERVTSGDPELPQV</sequence>
<keyword id="KW-0002">3D-structure</keyword>
<keyword id="KW-0037">Angiogenesis</keyword>
<keyword id="KW-1003">Cell membrane</keyword>
<keyword id="KW-0217">Developmental protein</keyword>
<keyword id="KW-0221">Differentiation</keyword>
<keyword id="KW-1015">Disulfide bond</keyword>
<keyword id="KW-0245">EGF-like domain</keyword>
<keyword id="KW-0325">Glycoprotein</keyword>
<keyword id="KW-0339">Growth factor</keyword>
<keyword id="KW-0472">Membrane</keyword>
<keyword id="KW-0497">Mitogen</keyword>
<keyword id="KW-1267">Proteomics identification</keyword>
<keyword id="KW-1185">Reference proteome</keyword>
<keyword id="KW-0964">Secreted</keyword>
<keyword id="KW-0732">Signal</keyword>
<keyword id="KW-0812">Transmembrane</keyword>
<keyword id="KW-1133">Transmembrane helix</keyword>